<sequence>MSRVAKAPVVVPAGVDVKINGQVITIKGKNGELTRTLNDAVEVKHADNALTFGPRDGYVDGWAQAGTARALLNSMVIGVTEGFTKKLQLVGVGYRAAVKGNVVNLSLGFSHPVDHQLPAGITAECPTQTEIVLKGADKQVIGQVAADLRAYRRPEPYKGKGVRYADEVVRTKEAKKK</sequence>
<dbReference type="EMBL" id="CP000822">
    <property type="protein sequence ID" value="ABV15764.1"/>
    <property type="molecule type" value="Genomic_DNA"/>
</dbReference>
<dbReference type="RefSeq" id="WP_012135817.1">
    <property type="nucleotide sequence ID" value="NC_009792.1"/>
</dbReference>
<dbReference type="SMR" id="A8AQK0"/>
<dbReference type="STRING" id="290338.CKO_04719"/>
<dbReference type="GeneID" id="93035746"/>
<dbReference type="KEGG" id="cko:CKO_04719"/>
<dbReference type="HOGENOM" id="CLU_065464_1_2_6"/>
<dbReference type="OrthoDB" id="9805007at2"/>
<dbReference type="Proteomes" id="UP000008148">
    <property type="component" value="Chromosome"/>
</dbReference>
<dbReference type="GO" id="GO:0022625">
    <property type="term" value="C:cytosolic large ribosomal subunit"/>
    <property type="evidence" value="ECO:0007669"/>
    <property type="project" value="TreeGrafter"/>
</dbReference>
<dbReference type="GO" id="GO:0019843">
    <property type="term" value="F:rRNA binding"/>
    <property type="evidence" value="ECO:0007669"/>
    <property type="project" value="UniProtKB-UniRule"/>
</dbReference>
<dbReference type="GO" id="GO:0003735">
    <property type="term" value="F:structural constituent of ribosome"/>
    <property type="evidence" value="ECO:0007669"/>
    <property type="project" value="InterPro"/>
</dbReference>
<dbReference type="GO" id="GO:0002181">
    <property type="term" value="P:cytoplasmic translation"/>
    <property type="evidence" value="ECO:0007669"/>
    <property type="project" value="TreeGrafter"/>
</dbReference>
<dbReference type="FunFam" id="3.90.930.12:FF:000001">
    <property type="entry name" value="50S ribosomal protein L6"/>
    <property type="match status" value="1"/>
</dbReference>
<dbReference type="FunFam" id="3.90.930.12:FF:000002">
    <property type="entry name" value="50S ribosomal protein L6"/>
    <property type="match status" value="1"/>
</dbReference>
<dbReference type="Gene3D" id="3.90.930.12">
    <property type="entry name" value="Ribosomal protein L6, alpha-beta domain"/>
    <property type="match status" value="2"/>
</dbReference>
<dbReference type="HAMAP" id="MF_01365_B">
    <property type="entry name" value="Ribosomal_uL6_B"/>
    <property type="match status" value="1"/>
</dbReference>
<dbReference type="InterPro" id="IPR000702">
    <property type="entry name" value="Ribosomal_uL6-like"/>
</dbReference>
<dbReference type="InterPro" id="IPR036789">
    <property type="entry name" value="Ribosomal_uL6-like_a/b-dom_sf"/>
</dbReference>
<dbReference type="InterPro" id="IPR020040">
    <property type="entry name" value="Ribosomal_uL6_a/b-dom"/>
</dbReference>
<dbReference type="InterPro" id="IPR019906">
    <property type="entry name" value="Ribosomal_uL6_bac-type"/>
</dbReference>
<dbReference type="InterPro" id="IPR002358">
    <property type="entry name" value="Ribosomal_uL6_CS"/>
</dbReference>
<dbReference type="NCBIfam" id="TIGR03654">
    <property type="entry name" value="L6_bact"/>
    <property type="match status" value="1"/>
</dbReference>
<dbReference type="PANTHER" id="PTHR11655">
    <property type="entry name" value="60S/50S RIBOSOMAL PROTEIN L6/L9"/>
    <property type="match status" value="1"/>
</dbReference>
<dbReference type="PANTHER" id="PTHR11655:SF14">
    <property type="entry name" value="LARGE RIBOSOMAL SUBUNIT PROTEIN UL6M"/>
    <property type="match status" value="1"/>
</dbReference>
<dbReference type="Pfam" id="PF00347">
    <property type="entry name" value="Ribosomal_L6"/>
    <property type="match status" value="2"/>
</dbReference>
<dbReference type="PIRSF" id="PIRSF002162">
    <property type="entry name" value="Ribosomal_L6"/>
    <property type="match status" value="1"/>
</dbReference>
<dbReference type="PRINTS" id="PR00059">
    <property type="entry name" value="RIBOSOMALL6"/>
</dbReference>
<dbReference type="SUPFAM" id="SSF56053">
    <property type="entry name" value="Ribosomal protein L6"/>
    <property type="match status" value="2"/>
</dbReference>
<dbReference type="PROSITE" id="PS00525">
    <property type="entry name" value="RIBOSOMAL_L6_1"/>
    <property type="match status" value="1"/>
</dbReference>
<evidence type="ECO:0000255" key="1">
    <source>
        <dbReference type="HAMAP-Rule" id="MF_01365"/>
    </source>
</evidence>
<evidence type="ECO:0000305" key="2"/>
<protein>
    <recommendedName>
        <fullName evidence="1">Large ribosomal subunit protein uL6</fullName>
    </recommendedName>
    <alternativeName>
        <fullName evidence="2">50S ribosomal protein L6</fullName>
    </alternativeName>
</protein>
<feature type="chain" id="PRO_1000055218" description="Large ribosomal subunit protein uL6">
    <location>
        <begin position="1"/>
        <end position="177"/>
    </location>
</feature>
<name>RL6_CITK8</name>
<accession>A8AQK0</accession>
<reference key="1">
    <citation type="submission" date="2007-08" db="EMBL/GenBank/DDBJ databases">
        <authorList>
            <consortium name="The Citrobacter koseri Genome Sequencing Project"/>
            <person name="McClelland M."/>
            <person name="Sanderson E.K."/>
            <person name="Porwollik S."/>
            <person name="Spieth J."/>
            <person name="Clifton W.S."/>
            <person name="Latreille P."/>
            <person name="Courtney L."/>
            <person name="Wang C."/>
            <person name="Pepin K."/>
            <person name="Bhonagiri V."/>
            <person name="Nash W."/>
            <person name="Johnson M."/>
            <person name="Thiruvilangam P."/>
            <person name="Wilson R."/>
        </authorList>
    </citation>
    <scope>NUCLEOTIDE SEQUENCE [LARGE SCALE GENOMIC DNA]</scope>
    <source>
        <strain>ATCC BAA-895 / CDC 4225-83 / SGSC4696</strain>
    </source>
</reference>
<proteinExistence type="inferred from homology"/>
<gene>
    <name evidence="1" type="primary">rplF</name>
    <name type="ordered locus">CKO_04719</name>
</gene>
<keyword id="KW-1185">Reference proteome</keyword>
<keyword id="KW-0687">Ribonucleoprotein</keyword>
<keyword id="KW-0689">Ribosomal protein</keyword>
<keyword id="KW-0694">RNA-binding</keyword>
<keyword id="KW-0699">rRNA-binding</keyword>
<organism>
    <name type="scientific">Citrobacter koseri (strain ATCC BAA-895 / CDC 4225-83 / SGSC4696)</name>
    <dbReference type="NCBI Taxonomy" id="290338"/>
    <lineage>
        <taxon>Bacteria</taxon>
        <taxon>Pseudomonadati</taxon>
        <taxon>Pseudomonadota</taxon>
        <taxon>Gammaproteobacteria</taxon>
        <taxon>Enterobacterales</taxon>
        <taxon>Enterobacteriaceae</taxon>
        <taxon>Citrobacter</taxon>
    </lineage>
</organism>
<comment type="function">
    <text evidence="1">This protein binds to the 23S rRNA, and is important in its secondary structure. It is located near the subunit interface in the base of the L7/L12 stalk, and near the tRNA binding site of the peptidyltransferase center.</text>
</comment>
<comment type="subunit">
    <text evidence="1">Part of the 50S ribosomal subunit.</text>
</comment>
<comment type="similarity">
    <text evidence="1">Belongs to the universal ribosomal protein uL6 family.</text>
</comment>